<dbReference type="EC" id="2.7.1.130" evidence="1"/>
<dbReference type="EMBL" id="CP000931">
    <property type="protein sequence ID" value="ABZ77062.1"/>
    <property type="molecule type" value="Genomic_DNA"/>
</dbReference>
<dbReference type="RefSeq" id="WP_012277590.1">
    <property type="nucleotide sequence ID" value="NC_010334.1"/>
</dbReference>
<dbReference type="SMR" id="B0TK43"/>
<dbReference type="STRING" id="458817.Shal_2505"/>
<dbReference type="KEGG" id="shl:Shal_2505"/>
<dbReference type="eggNOG" id="COG1663">
    <property type="taxonomic scope" value="Bacteria"/>
</dbReference>
<dbReference type="HOGENOM" id="CLU_038816_2_0_6"/>
<dbReference type="OrthoDB" id="9766423at2"/>
<dbReference type="UniPathway" id="UPA00359">
    <property type="reaction ID" value="UER00482"/>
</dbReference>
<dbReference type="Proteomes" id="UP000001317">
    <property type="component" value="Chromosome"/>
</dbReference>
<dbReference type="GO" id="GO:0005886">
    <property type="term" value="C:plasma membrane"/>
    <property type="evidence" value="ECO:0007669"/>
    <property type="project" value="TreeGrafter"/>
</dbReference>
<dbReference type="GO" id="GO:0005524">
    <property type="term" value="F:ATP binding"/>
    <property type="evidence" value="ECO:0007669"/>
    <property type="project" value="UniProtKB-UniRule"/>
</dbReference>
<dbReference type="GO" id="GO:0009029">
    <property type="term" value="F:tetraacyldisaccharide 4'-kinase activity"/>
    <property type="evidence" value="ECO:0007669"/>
    <property type="project" value="UniProtKB-UniRule"/>
</dbReference>
<dbReference type="GO" id="GO:0009245">
    <property type="term" value="P:lipid A biosynthetic process"/>
    <property type="evidence" value="ECO:0007669"/>
    <property type="project" value="UniProtKB-UniRule"/>
</dbReference>
<dbReference type="GO" id="GO:0009244">
    <property type="term" value="P:lipopolysaccharide core region biosynthetic process"/>
    <property type="evidence" value="ECO:0007669"/>
    <property type="project" value="TreeGrafter"/>
</dbReference>
<dbReference type="HAMAP" id="MF_00409">
    <property type="entry name" value="LpxK"/>
    <property type="match status" value="1"/>
</dbReference>
<dbReference type="InterPro" id="IPR003758">
    <property type="entry name" value="LpxK"/>
</dbReference>
<dbReference type="InterPro" id="IPR027417">
    <property type="entry name" value="P-loop_NTPase"/>
</dbReference>
<dbReference type="NCBIfam" id="TIGR00682">
    <property type="entry name" value="lpxK"/>
    <property type="match status" value="1"/>
</dbReference>
<dbReference type="PANTHER" id="PTHR42724">
    <property type="entry name" value="TETRAACYLDISACCHARIDE 4'-KINASE"/>
    <property type="match status" value="1"/>
</dbReference>
<dbReference type="PANTHER" id="PTHR42724:SF1">
    <property type="entry name" value="TETRAACYLDISACCHARIDE 4'-KINASE, MITOCHONDRIAL-RELATED"/>
    <property type="match status" value="1"/>
</dbReference>
<dbReference type="Pfam" id="PF02606">
    <property type="entry name" value="LpxK"/>
    <property type="match status" value="1"/>
</dbReference>
<dbReference type="SUPFAM" id="SSF52540">
    <property type="entry name" value="P-loop containing nucleoside triphosphate hydrolases"/>
    <property type="match status" value="1"/>
</dbReference>
<name>LPXK_SHEHH</name>
<proteinExistence type="inferred from homology"/>
<comment type="function">
    <text evidence="1">Transfers the gamma-phosphate of ATP to the 4'-position of a tetraacyldisaccharide 1-phosphate intermediate (termed DS-1-P) to form tetraacyldisaccharide 1,4'-bis-phosphate (lipid IVA).</text>
</comment>
<comment type="catalytic activity">
    <reaction evidence="1">
        <text>a lipid A disaccharide + ATP = a lipid IVA + ADP + H(+)</text>
        <dbReference type="Rhea" id="RHEA:67840"/>
        <dbReference type="ChEBI" id="CHEBI:15378"/>
        <dbReference type="ChEBI" id="CHEBI:30616"/>
        <dbReference type="ChEBI" id="CHEBI:176343"/>
        <dbReference type="ChEBI" id="CHEBI:176425"/>
        <dbReference type="ChEBI" id="CHEBI:456216"/>
        <dbReference type="EC" id="2.7.1.130"/>
    </reaction>
</comment>
<comment type="pathway">
    <text evidence="1">Glycolipid biosynthesis; lipid IV(A) biosynthesis; lipid IV(A) from (3R)-3-hydroxytetradecanoyl-[acyl-carrier-protein] and UDP-N-acetyl-alpha-D-glucosamine: step 6/6.</text>
</comment>
<comment type="similarity">
    <text evidence="1">Belongs to the LpxK family.</text>
</comment>
<evidence type="ECO:0000255" key="1">
    <source>
        <dbReference type="HAMAP-Rule" id="MF_00409"/>
    </source>
</evidence>
<protein>
    <recommendedName>
        <fullName evidence="1">Tetraacyldisaccharide 4'-kinase</fullName>
        <ecNumber evidence="1">2.7.1.130</ecNumber>
    </recommendedName>
    <alternativeName>
        <fullName evidence="1">Lipid A 4'-kinase</fullName>
    </alternativeName>
</protein>
<feature type="chain" id="PRO_0000340860" description="Tetraacyldisaccharide 4'-kinase">
    <location>
        <begin position="1"/>
        <end position="330"/>
    </location>
</feature>
<feature type="binding site" evidence="1">
    <location>
        <begin position="58"/>
        <end position="65"/>
    </location>
    <ligand>
        <name>ATP</name>
        <dbReference type="ChEBI" id="CHEBI:30616"/>
    </ligand>
</feature>
<reference key="1">
    <citation type="submission" date="2008-01" db="EMBL/GenBank/DDBJ databases">
        <title>Complete sequence of Shewanella halifaxensis HAW-EB4.</title>
        <authorList>
            <consortium name="US DOE Joint Genome Institute"/>
            <person name="Copeland A."/>
            <person name="Lucas S."/>
            <person name="Lapidus A."/>
            <person name="Glavina del Rio T."/>
            <person name="Dalin E."/>
            <person name="Tice H."/>
            <person name="Bruce D."/>
            <person name="Goodwin L."/>
            <person name="Pitluck S."/>
            <person name="Sims D."/>
            <person name="Brettin T."/>
            <person name="Detter J.C."/>
            <person name="Han C."/>
            <person name="Kuske C.R."/>
            <person name="Schmutz J."/>
            <person name="Larimer F."/>
            <person name="Land M."/>
            <person name="Hauser L."/>
            <person name="Kyrpides N."/>
            <person name="Kim E."/>
            <person name="Zhao J.-S."/>
            <person name="Richardson P."/>
        </authorList>
    </citation>
    <scope>NUCLEOTIDE SEQUENCE [LARGE SCALE GENOMIC DNA]</scope>
    <source>
        <strain>HAW-EB4</strain>
    </source>
</reference>
<accession>B0TK43</accession>
<organism>
    <name type="scientific">Shewanella halifaxensis (strain HAW-EB4)</name>
    <dbReference type="NCBI Taxonomy" id="458817"/>
    <lineage>
        <taxon>Bacteria</taxon>
        <taxon>Pseudomonadati</taxon>
        <taxon>Pseudomonadota</taxon>
        <taxon>Gammaproteobacteria</taxon>
        <taxon>Alteromonadales</taxon>
        <taxon>Shewanellaceae</taxon>
        <taxon>Shewanella</taxon>
    </lineage>
</organism>
<sequence>MQSWVNKLWYQGHPLRFALWPLSLLFGFVTWLRRVLFSLGLKKAAKLPVPVIIVGNITVGGSGKTPTVIYLIELLRKHGLKPGVISRGYGVEIDGVRAVLSGDRADSVGDEPAMIVARTQVPMLVGAKRIDAANLLLSEFDVDIIISDDGLQHYQLARDIELVILDGERRLGNGMLLPAGPLREGPWRLQNVDHVIVNGGKALQGEVQMTLQPSAWLPVSTKHNAGEPPSKDSPLVAMAGIGNPQRFFDTLAQQGYQVEHTQTFDDHSAYSESVLNELASGRMLVMTEKDAVKCRDFAKDNWWYLAVDAKLSASFDQQLLAKIDRLVADK</sequence>
<gene>
    <name evidence="1" type="primary">lpxK</name>
    <name type="ordered locus">Shal_2505</name>
</gene>
<keyword id="KW-0067">ATP-binding</keyword>
<keyword id="KW-0418">Kinase</keyword>
<keyword id="KW-0441">Lipid A biosynthesis</keyword>
<keyword id="KW-0444">Lipid biosynthesis</keyword>
<keyword id="KW-0443">Lipid metabolism</keyword>
<keyword id="KW-0547">Nucleotide-binding</keyword>
<keyword id="KW-0808">Transferase</keyword>